<comment type="function">
    <text evidence="1">Specifically methylates the N4 position of cytidine in position 1402 (C1402) of 16S rRNA.</text>
</comment>
<comment type="catalytic activity">
    <reaction evidence="1">
        <text>cytidine(1402) in 16S rRNA + S-adenosyl-L-methionine = N(4)-methylcytidine(1402) in 16S rRNA + S-adenosyl-L-homocysteine + H(+)</text>
        <dbReference type="Rhea" id="RHEA:42928"/>
        <dbReference type="Rhea" id="RHEA-COMP:10286"/>
        <dbReference type="Rhea" id="RHEA-COMP:10287"/>
        <dbReference type="ChEBI" id="CHEBI:15378"/>
        <dbReference type="ChEBI" id="CHEBI:57856"/>
        <dbReference type="ChEBI" id="CHEBI:59789"/>
        <dbReference type="ChEBI" id="CHEBI:74506"/>
        <dbReference type="ChEBI" id="CHEBI:82748"/>
        <dbReference type="EC" id="2.1.1.199"/>
    </reaction>
</comment>
<comment type="subcellular location">
    <subcellularLocation>
        <location evidence="1">Cytoplasm</location>
    </subcellularLocation>
</comment>
<comment type="similarity">
    <text evidence="1">Belongs to the methyltransferase superfamily. RsmH family.</text>
</comment>
<gene>
    <name evidence="1" type="primary">rsmH</name>
    <name type="synonym">mraW</name>
    <name type="ordered locus">CBU_0116</name>
</gene>
<protein>
    <recommendedName>
        <fullName evidence="1">Ribosomal RNA small subunit methyltransferase H</fullName>
        <ecNumber evidence="1">2.1.1.199</ecNumber>
    </recommendedName>
    <alternativeName>
        <fullName evidence="1">16S rRNA m(4)C1402 methyltransferase</fullName>
    </alternativeName>
    <alternativeName>
        <fullName evidence="1">rRNA (cytosine-N(4)-)-methyltransferase RsmH</fullName>
    </alternativeName>
</protein>
<feature type="chain" id="PRO_0000108616" description="Ribosomal RNA small subunit methyltransferase H">
    <location>
        <begin position="1"/>
        <end position="307"/>
    </location>
</feature>
<feature type="binding site" evidence="1">
    <location>
        <begin position="32"/>
        <end position="34"/>
    </location>
    <ligand>
        <name>S-adenosyl-L-methionine</name>
        <dbReference type="ChEBI" id="CHEBI:59789"/>
    </ligand>
</feature>
<feature type="binding site" evidence="1">
    <location>
        <position position="52"/>
    </location>
    <ligand>
        <name>S-adenosyl-L-methionine</name>
        <dbReference type="ChEBI" id="CHEBI:59789"/>
    </ligand>
</feature>
<feature type="binding site" evidence="1">
    <location>
        <position position="78"/>
    </location>
    <ligand>
        <name>S-adenosyl-L-methionine</name>
        <dbReference type="ChEBI" id="CHEBI:59789"/>
    </ligand>
</feature>
<feature type="binding site" evidence="1">
    <location>
        <position position="100"/>
    </location>
    <ligand>
        <name>S-adenosyl-L-methionine</name>
        <dbReference type="ChEBI" id="CHEBI:59789"/>
    </ligand>
</feature>
<feature type="binding site" evidence="1">
    <location>
        <position position="107"/>
    </location>
    <ligand>
        <name>S-adenosyl-L-methionine</name>
        <dbReference type="ChEBI" id="CHEBI:59789"/>
    </ligand>
</feature>
<proteinExistence type="inferred from homology"/>
<reference key="1">
    <citation type="journal article" date="2003" name="Proc. Natl. Acad. Sci. U.S.A.">
        <title>Complete genome sequence of the Q-fever pathogen, Coxiella burnetii.</title>
        <authorList>
            <person name="Seshadri R."/>
            <person name="Paulsen I.T."/>
            <person name="Eisen J.A."/>
            <person name="Read T.D."/>
            <person name="Nelson K.E."/>
            <person name="Nelson W.C."/>
            <person name="Ward N.L."/>
            <person name="Tettelin H."/>
            <person name="Davidsen T.M."/>
            <person name="Beanan M.J."/>
            <person name="DeBoy R.T."/>
            <person name="Daugherty S.C."/>
            <person name="Brinkac L.M."/>
            <person name="Madupu R."/>
            <person name="Dodson R.J."/>
            <person name="Khouri H.M."/>
            <person name="Lee K.H."/>
            <person name="Carty H.A."/>
            <person name="Scanlan D."/>
            <person name="Heinzen R.A."/>
            <person name="Thompson H.A."/>
            <person name="Samuel J.E."/>
            <person name="Fraser C.M."/>
            <person name="Heidelberg J.F."/>
        </authorList>
    </citation>
    <scope>NUCLEOTIDE SEQUENCE [LARGE SCALE GENOMIC DNA]</scope>
    <source>
        <strain>RSA 493 / Nine Mile phase I</strain>
    </source>
</reference>
<dbReference type="EC" id="2.1.1.199" evidence="1"/>
<dbReference type="EMBL" id="AE016828">
    <property type="protein sequence ID" value="AAO89680.1"/>
    <property type="molecule type" value="Genomic_DNA"/>
</dbReference>
<dbReference type="RefSeq" id="NP_819166.1">
    <property type="nucleotide sequence ID" value="NC_002971.3"/>
</dbReference>
<dbReference type="RefSeq" id="WP_005769446.1">
    <property type="nucleotide sequence ID" value="NZ_CDBG01000001.1"/>
</dbReference>
<dbReference type="SMR" id="Q83F35"/>
<dbReference type="STRING" id="227377.CBU_0116"/>
<dbReference type="EnsemblBacteria" id="AAO89680">
    <property type="protein sequence ID" value="AAO89680"/>
    <property type="gene ID" value="CBU_0116"/>
</dbReference>
<dbReference type="GeneID" id="1207987"/>
<dbReference type="KEGG" id="cbu:CBU_0116"/>
<dbReference type="PATRIC" id="fig|227377.7.peg.119"/>
<dbReference type="eggNOG" id="COG0275">
    <property type="taxonomic scope" value="Bacteria"/>
</dbReference>
<dbReference type="HOGENOM" id="CLU_038422_2_0_6"/>
<dbReference type="OrthoDB" id="9806637at2"/>
<dbReference type="Proteomes" id="UP000002671">
    <property type="component" value="Chromosome"/>
</dbReference>
<dbReference type="GO" id="GO:0005737">
    <property type="term" value="C:cytoplasm"/>
    <property type="evidence" value="ECO:0000318"/>
    <property type="project" value="GO_Central"/>
</dbReference>
<dbReference type="GO" id="GO:0071424">
    <property type="term" value="F:rRNA (cytosine-N4-)-methyltransferase activity"/>
    <property type="evidence" value="ECO:0000318"/>
    <property type="project" value="GO_Central"/>
</dbReference>
<dbReference type="GO" id="GO:0070475">
    <property type="term" value="P:rRNA base methylation"/>
    <property type="evidence" value="ECO:0000318"/>
    <property type="project" value="GO_Central"/>
</dbReference>
<dbReference type="FunFam" id="1.10.150.170:FF:000001">
    <property type="entry name" value="Ribosomal RNA small subunit methyltransferase H"/>
    <property type="match status" value="1"/>
</dbReference>
<dbReference type="Gene3D" id="1.10.150.170">
    <property type="entry name" value="Putative methyltransferase TM0872, insert domain"/>
    <property type="match status" value="1"/>
</dbReference>
<dbReference type="Gene3D" id="3.40.50.150">
    <property type="entry name" value="Vaccinia Virus protein VP39"/>
    <property type="match status" value="1"/>
</dbReference>
<dbReference type="HAMAP" id="MF_01007">
    <property type="entry name" value="16SrRNA_methyltr_H"/>
    <property type="match status" value="1"/>
</dbReference>
<dbReference type="InterPro" id="IPR002903">
    <property type="entry name" value="RsmH"/>
</dbReference>
<dbReference type="InterPro" id="IPR023397">
    <property type="entry name" value="SAM-dep_MeTrfase_MraW_recog"/>
</dbReference>
<dbReference type="InterPro" id="IPR029063">
    <property type="entry name" value="SAM-dependent_MTases_sf"/>
</dbReference>
<dbReference type="NCBIfam" id="TIGR00006">
    <property type="entry name" value="16S rRNA (cytosine(1402)-N(4))-methyltransferase RsmH"/>
    <property type="match status" value="1"/>
</dbReference>
<dbReference type="PANTHER" id="PTHR11265:SF0">
    <property type="entry name" value="12S RRNA N4-METHYLCYTIDINE METHYLTRANSFERASE"/>
    <property type="match status" value="1"/>
</dbReference>
<dbReference type="PANTHER" id="PTHR11265">
    <property type="entry name" value="S-ADENOSYL-METHYLTRANSFERASE MRAW"/>
    <property type="match status" value="1"/>
</dbReference>
<dbReference type="Pfam" id="PF01795">
    <property type="entry name" value="Methyltransf_5"/>
    <property type="match status" value="1"/>
</dbReference>
<dbReference type="PIRSF" id="PIRSF004486">
    <property type="entry name" value="MraW"/>
    <property type="match status" value="1"/>
</dbReference>
<dbReference type="SUPFAM" id="SSF81799">
    <property type="entry name" value="Putative methyltransferase TM0872, insert domain"/>
    <property type="match status" value="1"/>
</dbReference>
<dbReference type="SUPFAM" id="SSF53335">
    <property type="entry name" value="S-adenosyl-L-methionine-dependent methyltransferases"/>
    <property type="match status" value="1"/>
</dbReference>
<organism>
    <name type="scientific">Coxiella burnetii (strain RSA 493 / Nine Mile phase I)</name>
    <dbReference type="NCBI Taxonomy" id="227377"/>
    <lineage>
        <taxon>Bacteria</taxon>
        <taxon>Pseudomonadati</taxon>
        <taxon>Pseudomonadota</taxon>
        <taxon>Gammaproteobacteria</taxon>
        <taxon>Legionellales</taxon>
        <taxon>Coxiellaceae</taxon>
        <taxon>Coxiella</taxon>
    </lineage>
</organism>
<sequence length="307" mass="34923">MEAHKPVLFDEVMEGLAIRPDGIYVDGTFGRGGHSFGILQRLGPNGRLMAMDKDPDAVAVANKALFEDARFSIVHETFANLQKAVRDRGWEGKVNGILLDIGVSSPQLEDAKRGFSFSKDGPLDMRMNPKQSMDAASWINQAAMEDIRRVLWNYGEERFAKRIAQAIVNAREEKPITRTQELSDIVIKAYPQREIKKHPATRTFQAIRIFINRELDELRECLPQCLETLAVGGRLCVISFHSLEDRLVKRFIQKESRDHLPREIPILAKDIKHRLKPLGSLIRPTEAEIKKNPRARSARLRIVEKLS</sequence>
<keyword id="KW-0963">Cytoplasm</keyword>
<keyword id="KW-0489">Methyltransferase</keyword>
<keyword id="KW-1185">Reference proteome</keyword>
<keyword id="KW-0698">rRNA processing</keyword>
<keyword id="KW-0949">S-adenosyl-L-methionine</keyword>
<keyword id="KW-0808">Transferase</keyword>
<name>RSMH_COXBU</name>
<accession>Q83F35</accession>
<evidence type="ECO:0000255" key="1">
    <source>
        <dbReference type="HAMAP-Rule" id="MF_01007"/>
    </source>
</evidence>